<proteinExistence type="inferred from homology"/>
<comment type="function">
    <text evidence="1">Catalyzes the methylthiolation of N6-(dimethylallyl)adenosine (i(6)A), leading to the formation of 2-methylthio-N6-(dimethylallyl)adenosine (ms(2)i(6)A) at position 37 in tRNAs that read codons beginning with uridine.</text>
</comment>
<comment type="catalytic activity">
    <reaction evidence="1">
        <text>N(6)-dimethylallyladenosine(37) in tRNA + (sulfur carrier)-SH + AH2 + 2 S-adenosyl-L-methionine = 2-methylsulfanyl-N(6)-dimethylallyladenosine(37) in tRNA + (sulfur carrier)-H + 5'-deoxyadenosine + L-methionine + A + S-adenosyl-L-homocysteine + 2 H(+)</text>
        <dbReference type="Rhea" id="RHEA:37067"/>
        <dbReference type="Rhea" id="RHEA-COMP:10375"/>
        <dbReference type="Rhea" id="RHEA-COMP:10376"/>
        <dbReference type="Rhea" id="RHEA-COMP:14737"/>
        <dbReference type="Rhea" id="RHEA-COMP:14739"/>
        <dbReference type="ChEBI" id="CHEBI:13193"/>
        <dbReference type="ChEBI" id="CHEBI:15378"/>
        <dbReference type="ChEBI" id="CHEBI:17319"/>
        <dbReference type="ChEBI" id="CHEBI:17499"/>
        <dbReference type="ChEBI" id="CHEBI:29917"/>
        <dbReference type="ChEBI" id="CHEBI:57844"/>
        <dbReference type="ChEBI" id="CHEBI:57856"/>
        <dbReference type="ChEBI" id="CHEBI:59789"/>
        <dbReference type="ChEBI" id="CHEBI:64428"/>
        <dbReference type="ChEBI" id="CHEBI:74415"/>
        <dbReference type="ChEBI" id="CHEBI:74417"/>
        <dbReference type="EC" id="2.8.4.3"/>
    </reaction>
</comment>
<comment type="cofactor">
    <cofactor evidence="1">
        <name>[4Fe-4S] cluster</name>
        <dbReference type="ChEBI" id="CHEBI:49883"/>
    </cofactor>
    <text evidence="1">Binds 2 [4Fe-4S] clusters. One cluster is coordinated with 3 cysteines and an exchangeable S-adenosyl-L-methionine.</text>
</comment>
<comment type="subunit">
    <text evidence="1">Monomer.</text>
</comment>
<comment type="subcellular location">
    <subcellularLocation>
        <location evidence="1">Cytoplasm</location>
    </subcellularLocation>
</comment>
<comment type="similarity">
    <text evidence="1">Belongs to the methylthiotransferase family. MiaB subfamily.</text>
</comment>
<name>MIAB_NEIG2</name>
<sequence length="442" mass="49624">MKKVFIRTFGCQMNEYDSEKMLSVLAEEHGGIEQVTQADEADIILFNTCSVREKAQEKVFSDLGRVRPLKEKNPGLIIGVAGCVASQEGENIIKRAPYVDVVFGPQTLHRLPKMIVDKETSGLSQVDISFPEIEKFDHLPPARVEGGAAFVSIMEGCSKYCSFCVVPYTRGEEFSRPLNDVLTEIANLAQQGVKEINLLGQNVNAYRGEMDDGEICDFATLLRIVHEIPGIERMRFTTSHPREFTDSIIECYRDLPKLVSHLHLPIQSGSDRVLSAMKRGYTALEYKSIIRKLRAIRPDLCLSSDFIVGFPGETEREFEQTLKLVKDIAFDLSFVFIYSPRPGTPAANLPDDTPHEEKVRRLEALNEVIEAETARINQTMIGTVQRCLVEGISKKDPDQLQARTANNRVVNFTGTPDMINQMIDLEITEAYTFSLRGKIVEA</sequence>
<organism>
    <name type="scientific">Neisseria gonorrhoeae (strain NCCP11945)</name>
    <dbReference type="NCBI Taxonomy" id="521006"/>
    <lineage>
        <taxon>Bacteria</taxon>
        <taxon>Pseudomonadati</taxon>
        <taxon>Pseudomonadota</taxon>
        <taxon>Betaproteobacteria</taxon>
        <taxon>Neisseriales</taxon>
        <taxon>Neisseriaceae</taxon>
        <taxon>Neisseria</taxon>
    </lineage>
</organism>
<feature type="chain" id="PRO_0000374401" description="tRNA-2-methylthio-N(6)-dimethylallyladenosine synthase">
    <location>
        <begin position="1"/>
        <end position="442"/>
    </location>
</feature>
<feature type="domain" description="MTTase N-terminal" evidence="1">
    <location>
        <begin position="2"/>
        <end position="120"/>
    </location>
</feature>
<feature type="domain" description="Radical SAM core" evidence="2">
    <location>
        <begin position="143"/>
        <end position="375"/>
    </location>
</feature>
<feature type="domain" description="TRAM" evidence="1">
    <location>
        <begin position="378"/>
        <end position="441"/>
    </location>
</feature>
<feature type="binding site" evidence="1">
    <location>
        <position position="11"/>
    </location>
    <ligand>
        <name>[4Fe-4S] cluster</name>
        <dbReference type="ChEBI" id="CHEBI:49883"/>
        <label>1</label>
    </ligand>
</feature>
<feature type="binding site" evidence="1">
    <location>
        <position position="49"/>
    </location>
    <ligand>
        <name>[4Fe-4S] cluster</name>
        <dbReference type="ChEBI" id="CHEBI:49883"/>
        <label>1</label>
    </ligand>
</feature>
<feature type="binding site" evidence="1">
    <location>
        <position position="83"/>
    </location>
    <ligand>
        <name>[4Fe-4S] cluster</name>
        <dbReference type="ChEBI" id="CHEBI:49883"/>
        <label>1</label>
    </ligand>
</feature>
<feature type="binding site" evidence="1">
    <location>
        <position position="157"/>
    </location>
    <ligand>
        <name>[4Fe-4S] cluster</name>
        <dbReference type="ChEBI" id="CHEBI:49883"/>
        <label>2</label>
        <note>4Fe-4S-S-AdoMet</note>
    </ligand>
</feature>
<feature type="binding site" evidence="1">
    <location>
        <position position="161"/>
    </location>
    <ligand>
        <name>[4Fe-4S] cluster</name>
        <dbReference type="ChEBI" id="CHEBI:49883"/>
        <label>2</label>
        <note>4Fe-4S-S-AdoMet</note>
    </ligand>
</feature>
<feature type="binding site" evidence="1">
    <location>
        <position position="164"/>
    </location>
    <ligand>
        <name>[4Fe-4S] cluster</name>
        <dbReference type="ChEBI" id="CHEBI:49883"/>
        <label>2</label>
        <note>4Fe-4S-S-AdoMet</note>
    </ligand>
</feature>
<reference key="1">
    <citation type="journal article" date="2008" name="J. Bacteriol.">
        <title>Complete genome sequence of Neisseria gonorrhoeae NCCP11945.</title>
        <authorList>
            <person name="Chung G.T."/>
            <person name="Yoo J.S."/>
            <person name="Oh H.B."/>
            <person name="Lee Y.S."/>
            <person name="Cha S.H."/>
            <person name="Kim S.J."/>
            <person name="Yoo C.K."/>
        </authorList>
    </citation>
    <scope>NUCLEOTIDE SEQUENCE [LARGE SCALE GENOMIC DNA]</scope>
    <source>
        <strain>NCCP11945</strain>
    </source>
</reference>
<dbReference type="EC" id="2.8.4.3" evidence="1"/>
<dbReference type="EMBL" id="CP001050">
    <property type="protein sequence ID" value="ACF28750.1"/>
    <property type="molecule type" value="Genomic_DNA"/>
</dbReference>
<dbReference type="RefSeq" id="WP_003687255.1">
    <property type="nucleotide sequence ID" value="NC_011035.1"/>
</dbReference>
<dbReference type="SMR" id="B4RNW8"/>
<dbReference type="GeneID" id="66752301"/>
<dbReference type="KEGG" id="ngk:NGK_0047"/>
<dbReference type="HOGENOM" id="CLU_018697_2_0_4"/>
<dbReference type="Proteomes" id="UP000002564">
    <property type="component" value="Chromosome"/>
</dbReference>
<dbReference type="GO" id="GO:0005829">
    <property type="term" value="C:cytosol"/>
    <property type="evidence" value="ECO:0007669"/>
    <property type="project" value="TreeGrafter"/>
</dbReference>
<dbReference type="GO" id="GO:0051539">
    <property type="term" value="F:4 iron, 4 sulfur cluster binding"/>
    <property type="evidence" value="ECO:0007669"/>
    <property type="project" value="UniProtKB-UniRule"/>
</dbReference>
<dbReference type="GO" id="GO:0046872">
    <property type="term" value="F:metal ion binding"/>
    <property type="evidence" value="ECO:0007669"/>
    <property type="project" value="UniProtKB-KW"/>
</dbReference>
<dbReference type="GO" id="GO:0035597">
    <property type="term" value="F:N6-isopentenyladenosine methylthiotransferase activity"/>
    <property type="evidence" value="ECO:0007669"/>
    <property type="project" value="TreeGrafter"/>
</dbReference>
<dbReference type="CDD" id="cd01335">
    <property type="entry name" value="Radical_SAM"/>
    <property type="match status" value="1"/>
</dbReference>
<dbReference type="FunFam" id="3.40.50.12160:FF:000001">
    <property type="entry name" value="tRNA-2-methylthio-N(6)-dimethylallyladenosine synthase"/>
    <property type="match status" value="1"/>
</dbReference>
<dbReference type="FunFam" id="3.80.30.20:FF:000001">
    <property type="entry name" value="tRNA-2-methylthio-N(6)-dimethylallyladenosine synthase 2"/>
    <property type="match status" value="1"/>
</dbReference>
<dbReference type="Gene3D" id="3.40.50.12160">
    <property type="entry name" value="Methylthiotransferase, N-terminal domain"/>
    <property type="match status" value="1"/>
</dbReference>
<dbReference type="Gene3D" id="3.80.30.20">
    <property type="entry name" value="tm_1862 like domain"/>
    <property type="match status" value="1"/>
</dbReference>
<dbReference type="HAMAP" id="MF_01864">
    <property type="entry name" value="tRNA_metthiotr_MiaB"/>
    <property type="match status" value="1"/>
</dbReference>
<dbReference type="InterPro" id="IPR006638">
    <property type="entry name" value="Elp3/MiaA/NifB-like_rSAM"/>
</dbReference>
<dbReference type="InterPro" id="IPR005839">
    <property type="entry name" value="Methylthiotransferase"/>
</dbReference>
<dbReference type="InterPro" id="IPR020612">
    <property type="entry name" value="Methylthiotransferase_CS"/>
</dbReference>
<dbReference type="InterPro" id="IPR013848">
    <property type="entry name" value="Methylthiotransferase_N"/>
</dbReference>
<dbReference type="InterPro" id="IPR038135">
    <property type="entry name" value="Methylthiotransferase_N_sf"/>
</dbReference>
<dbReference type="InterPro" id="IPR006463">
    <property type="entry name" value="MiaB_methiolase"/>
</dbReference>
<dbReference type="InterPro" id="IPR007197">
    <property type="entry name" value="rSAM"/>
</dbReference>
<dbReference type="InterPro" id="IPR023404">
    <property type="entry name" value="rSAM_horseshoe"/>
</dbReference>
<dbReference type="InterPro" id="IPR002792">
    <property type="entry name" value="TRAM_dom"/>
</dbReference>
<dbReference type="NCBIfam" id="TIGR01574">
    <property type="entry name" value="miaB-methiolase"/>
    <property type="match status" value="1"/>
</dbReference>
<dbReference type="NCBIfam" id="TIGR00089">
    <property type="entry name" value="MiaB/RimO family radical SAM methylthiotransferase"/>
    <property type="match status" value="1"/>
</dbReference>
<dbReference type="PANTHER" id="PTHR43020">
    <property type="entry name" value="CDK5 REGULATORY SUBUNIT-ASSOCIATED PROTEIN 1"/>
    <property type="match status" value="1"/>
</dbReference>
<dbReference type="PANTHER" id="PTHR43020:SF2">
    <property type="entry name" value="MITOCHONDRIAL TRNA METHYLTHIOTRANSFERASE CDK5RAP1"/>
    <property type="match status" value="1"/>
</dbReference>
<dbReference type="Pfam" id="PF04055">
    <property type="entry name" value="Radical_SAM"/>
    <property type="match status" value="1"/>
</dbReference>
<dbReference type="Pfam" id="PF01938">
    <property type="entry name" value="TRAM"/>
    <property type="match status" value="1"/>
</dbReference>
<dbReference type="Pfam" id="PF00919">
    <property type="entry name" value="UPF0004"/>
    <property type="match status" value="1"/>
</dbReference>
<dbReference type="SFLD" id="SFLDF00273">
    <property type="entry name" value="(dimethylallyl)adenosine_tRNA"/>
    <property type="match status" value="1"/>
</dbReference>
<dbReference type="SFLD" id="SFLDG01082">
    <property type="entry name" value="B12-binding_domain_containing"/>
    <property type="match status" value="1"/>
</dbReference>
<dbReference type="SFLD" id="SFLDS00029">
    <property type="entry name" value="Radical_SAM"/>
    <property type="match status" value="1"/>
</dbReference>
<dbReference type="SMART" id="SM00729">
    <property type="entry name" value="Elp3"/>
    <property type="match status" value="1"/>
</dbReference>
<dbReference type="SUPFAM" id="SSF102114">
    <property type="entry name" value="Radical SAM enzymes"/>
    <property type="match status" value="1"/>
</dbReference>
<dbReference type="PROSITE" id="PS51449">
    <property type="entry name" value="MTTASE_N"/>
    <property type="match status" value="1"/>
</dbReference>
<dbReference type="PROSITE" id="PS01278">
    <property type="entry name" value="MTTASE_RADICAL"/>
    <property type="match status" value="1"/>
</dbReference>
<dbReference type="PROSITE" id="PS51918">
    <property type="entry name" value="RADICAL_SAM"/>
    <property type="match status" value="1"/>
</dbReference>
<dbReference type="PROSITE" id="PS50926">
    <property type="entry name" value="TRAM"/>
    <property type="match status" value="1"/>
</dbReference>
<gene>
    <name evidence="1" type="primary">miaB</name>
    <name type="ordered locus">NGK_0047</name>
</gene>
<keyword id="KW-0004">4Fe-4S</keyword>
<keyword id="KW-0963">Cytoplasm</keyword>
<keyword id="KW-0408">Iron</keyword>
<keyword id="KW-0411">Iron-sulfur</keyword>
<keyword id="KW-0479">Metal-binding</keyword>
<keyword id="KW-0949">S-adenosyl-L-methionine</keyword>
<keyword id="KW-0808">Transferase</keyword>
<keyword id="KW-0819">tRNA processing</keyword>
<evidence type="ECO:0000255" key="1">
    <source>
        <dbReference type="HAMAP-Rule" id="MF_01864"/>
    </source>
</evidence>
<evidence type="ECO:0000255" key="2">
    <source>
        <dbReference type="PROSITE-ProRule" id="PRU01266"/>
    </source>
</evidence>
<accession>B4RNW8</accession>
<protein>
    <recommendedName>
        <fullName evidence="1">tRNA-2-methylthio-N(6)-dimethylallyladenosine synthase</fullName>
        <ecNumber evidence="1">2.8.4.3</ecNumber>
    </recommendedName>
    <alternativeName>
        <fullName evidence="1">(Dimethylallyl)adenosine tRNA methylthiotransferase MiaB</fullName>
    </alternativeName>
    <alternativeName>
        <fullName evidence="1">tRNA-i(6)A37 methylthiotransferase</fullName>
    </alternativeName>
</protein>